<accession>P63925</accession>
<accession>Q99X76</accession>
<comment type="function">
    <text evidence="1">Isomerase that catalyzes the conversion of deoxy-ribose 1-phosphate (dRib-1-P) and ribose 1-phosphate (Rib-1-P) to deoxy-ribose 5-phosphate (dRib-5-P) and ribose 5-phosphate (Rib-5-P), respectively.</text>
</comment>
<comment type="catalytic activity">
    <reaction evidence="1">
        <text>2-deoxy-alpha-D-ribose 1-phosphate = 2-deoxy-D-ribose 5-phosphate</text>
        <dbReference type="Rhea" id="RHEA:27658"/>
        <dbReference type="ChEBI" id="CHEBI:57259"/>
        <dbReference type="ChEBI" id="CHEBI:62877"/>
        <dbReference type="EC" id="5.4.2.7"/>
    </reaction>
</comment>
<comment type="catalytic activity">
    <reaction evidence="1">
        <text>alpha-D-ribose 1-phosphate = D-ribose 5-phosphate</text>
        <dbReference type="Rhea" id="RHEA:18793"/>
        <dbReference type="ChEBI" id="CHEBI:57720"/>
        <dbReference type="ChEBI" id="CHEBI:78346"/>
        <dbReference type="EC" id="5.4.2.7"/>
    </reaction>
</comment>
<comment type="cofactor">
    <cofactor evidence="1">
        <name>Mn(2+)</name>
        <dbReference type="ChEBI" id="CHEBI:29035"/>
    </cofactor>
    <text evidence="1">Binds 2 manganese ions.</text>
</comment>
<comment type="pathway">
    <text evidence="1">Carbohydrate degradation; 2-deoxy-D-ribose 1-phosphate degradation; D-glyceraldehyde 3-phosphate and acetaldehyde from 2-deoxy-alpha-D-ribose 1-phosphate: step 1/2.</text>
</comment>
<comment type="subcellular location">
    <subcellularLocation>
        <location evidence="1">Cytoplasm</location>
    </subcellularLocation>
</comment>
<comment type="similarity">
    <text evidence="1">Belongs to the phosphopentomutase family.</text>
</comment>
<evidence type="ECO:0000255" key="1">
    <source>
        <dbReference type="HAMAP-Rule" id="MF_00740"/>
    </source>
</evidence>
<dbReference type="EC" id="5.4.2.7" evidence="1"/>
<dbReference type="EMBL" id="BA000017">
    <property type="protein sequence ID" value="BAB56301.1"/>
    <property type="molecule type" value="Genomic_DNA"/>
</dbReference>
<dbReference type="RefSeq" id="WP_000197806.1">
    <property type="nucleotide sequence ID" value="NC_002758.2"/>
</dbReference>
<dbReference type="SMR" id="P63925"/>
<dbReference type="KEGG" id="sav:SAV0139"/>
<dbReference type="HOGENOM" id="CLU_053861_0_0_9"/>
<dbReference type="PhylomeDB" id="P63925"/>
<dbReference type="UniPathway" id="UPA00002">
    <property type="reaction ID" value="UER00467"/>
</dbReference>
<dbReference type="Proteomes" id="UP000002481">
    <property type="component" value="Chromosome"/>
</dbReference>
<dbReference type="GO" id="GO:0005829">
    <property type="term" value="C:cytosol"/>
    <property type="evidence" value="ECO:0007669"/>
    <property type="project" value="TreeGrafter"/>
</dbReference>
<dbReference type="GO" id="GO:0000287">
    <property type="term" value="F:magnesium ion binding"/>
    <property type="evidence" value="ECO:0007669"/>
    <property type="project" value="InterPro"/>
</dbReference>
<dbReference type="GO" id="GO:0030145">
    <property type="term" value="F:manganese ion binding"/>
    <property type="evidence" value="ECO:0007669"/>
    <property type="project" value="UniProtKB-UniRule"/>
</dbReference>
<dbReference type="GO" id="GO:0008973">
    <property type="term" value="F:phosphopentomutase activity"/>
    <property type="evidence" value="ECO:0007669"/>
    <property type="project" value="UniProtKB-UniRule"/>
</dbReference>
<dbReference type="GO" id="GO:0006018">
    <property type="term" value="P:2-deoxyribose 1-phosphate catabolic process"/>
    <property type="evidence" value="ECO:0007669"/>
    <property type="project" value="UniProtKB-UniRule"/>
</dbReference>
<dbReference type="GO" id="GO:0006015">
    <property type="term" value="P:5-phosphoribose 1-diphosphate biosynthetic process"/>
    <property type="evidence" value="ECO:0007669"/>
    <property type="project" value="UniProtKB-UniPathway"/>
</dbReference>
<dbReference type="GO" id="GO:0043094">
    <property type="term" value="P:metabolic compound salvage"/>
    <property type="evidence" value="ECO:0007669"/>
    <property type="project" value="InterPro"/>
</dbReference>
<dbReference type="GO" id="GO:0009117">
    <property type="term" value="P:nucleotide metabolic process"/>
    <property type="evidence" value="ECO:0007669"/>
    <property type="project" value="InterPro"/>
</dbReference>
<dbReference type="CDD" id="cd16009">
    <property type="entry name" value="PPM"/>
    <property type="match status" value="1"/>
</dbReference>
<dbReference type="FunFam" id="3.30.70.1250:FF:000001">
    <property type="entry name" value="Phosphopentomutase"/>
    <property type="match status" value="1"/>
</dbReference>
<dbReference type="Gene3D" id="3.40.720.10">
    <property type="entry name" value="Alkaline Phosphatase, subunit A"/>
    <property type="match status" value="1"/>
</dbReference>
<dbReference type="Gene3D" id="3.30.70.1250">
    <property type="entry name" value="Phosphopentomutase"/>
    <property type="match status" value="1"/>
</dbReference>
<dbReference type="HAMAP" id="MF_00740">
    <property type="entry name" value="Phosphopentomut"/>
    <property type="match status" value="1"/>
</dbReference>
<dbReference type="InterPro" id="IPR017850">
    <property type="entry name" value="Alkaline_phosphatase_core_sf"/>
</dbReference>
<dbReference type="InterPro" id="IPR010045">
    <property type="entry name" value="DeoB"/>
</dbReference>
<dbReference type="InterPro" id="IPR006124">
    <property type="entry name" value="Metalloenzyme"/>
</dbReference>
<dbReference type="InterPro" id="IPR024052">
    <property type="entry name" value="Phosphopentomutase_DeoB_cap_sf"/>
</dbReference>
<dbReference type="NCBIfam" id="TIGR01696">
    <property type="entry name" value="deoB"/>
    <property type="match status" value="1"/>
</dbReference>
<dbReference type="NCBIfam" id="NF003766">
    <property type="entry name" value="PRK05362.1"/>
    <property type="match status" value="1"/>
</dbReference>
<dbReference type="PANTHER" id="PTHR21110">
    <property type="entry name" value="PHOSPHOPENTOMUTASE"/>
    <property type="match status" value="1"/>
</dbReference>
<dbReference type="PANTHER" id="PTHR21110:SF0">
    <property type="entry name" value="PHOSPHOPENTOMUTASE"/>
    <property type="match status" value="1"/>
</dbReference>
<dbReference type="Pfam" id="PF01676">
    <property type="entry name" value="Metalloenzyme"/>
    <property type="match status" value="1"/>
</dbReference>
<dbReference type="PIRSF" id="PIRSF001491">
    <property type="entry name" value="Ppentomutase"/>
    <property type="match status" value="1"/>
</dbReference>
<dbReference type="SUPFAM" id="SSF53649">
    <property type="entry name" value="Alkaline phosphatase-like"/>
    <property type="match status" value="1"/>
</dbReference>
<dbReference type="SUPFAM" id="SSF143856">
    <property type="entry name" value="DeoB insert domain-like"/>
    <property type="match status" value="1"/>
</dbReference>
<protein>
    <recommendedName>
        <fullName evidence="1">Phosphopentomutase</fullName>
        <ecNumber evidence="1">5.4.2.7</ecNumber>
    </recommendedName>
    <alternativeName>
        <fullName evidence="1">Phosphodeoxyribomutase</fullName>
    </alternativeName>
</protein>
<organism>
    <name type="scientific">Staphylococcus aureus (strain Mu50 / ATCC 700699)</name>
    <dbReference type="NCBI Taxonomy" id="158878"/>
    <lineage>
        <taxon>Bacteria</taxon>
        <taxon>Bacillati</taxon>
        <taxon>Bacillota</taxon>
        <taxon>Bacilli</taxon>
        <taxon>Bacillales</taxon>
        <taxon>Staphylococcaceae</taxon>
        <taxon>Staphylococcus</taxon>
    </lineage>
</organism>
<sequence length="392" mass="43796">MTRPFNRVHLIVMDSVGIGEAPDAADFKDEGSHTLRHTLEGFDQTLPNLEKLGLGNIDKLPVVNAVEQPEAYYTKLSEASVGKDTMTGHWEIMGLNIMQPFKVYPNGFPEELIQQIEEMTGRKVVANKPASGTQIIDEWGEHQMKTGDLIVYTSADPVLQIAAHEDIIPLEELYDICEKVRELTKDPKYLIGRIIARPYVGEPGNFTRTSNRHDYALKPFGKTVLDHLKDGGYDVIAIGKINDIYDGEGVTEAVRTKSNMDGMDQLMKIVKKDFTGISFLNLVDFDALYGHRRDKPGYAQAIKDFDDRLPELFSNLKEDDLVIITADHGNDPTAPGTDHTREYIPVIMYSPKFKGGHALESDTTFSSIGATIADNFNVTLPEFGKSYLKELK</sequence>
<proteinExistence type="inferred from homology"/>
<gene>
    <name evidence="1" type="primary">deoB</name>
    <name type="synonym">drm</name>
    <name type="ordered locus">SAV0139</name>
</gene>
<name>DEOB_STAAM</name>
<reference key="1">
    <citation type="journal article" date="2001" name="Lancet">
        <title>Whole genome sequencing of meticillin-resistant Staphylococcus aureus.</title>
        <authorList>
            <person name="Kuroda M."/>
            <person name="Ohta T."/>
            <person name="Uchiyama I."/>
            <person name="Baba T."/>
            <person name="Yuzawa H."/>
            <person name="Kobayashi I."/>
            <person name="Cui L."/>
            <person name="Oguchi A."/>
            <person name="Aoki K."/>
            <person name="Nagai Y."/>
            <person name="Lian J.-Q."/>
            <person name="Ito T."/>
            <person name="Kanamori M."/>
            <person name="Matsumaru H."/>
            <person name="Maruyama A."/>
            <person name="Murakami H."/>
            <person name="Hosoyama A."/>
            <person name="Mizutani-Ui Y."/>
            <person name="Takahashi N.K."/>
            <person name="Sawano T."/>
            <person name="Inoue R."/>
            <person name="Kaito C."/>
            <person name="Sekimizu K."/>
            <person name="Hirakawa H."/>
            <person name="Kuhara S."/>
            <person name="Goto S."/>
            <person name="Yabuzaki J."/>
            <person name="Kanehisa M."/>
            <person name="Yamashita A."/>
            <person name="Oshima K."/>
            <person name="Furuya K."/>
            <person name="Yoshino C."/>
            <person name="Shiba T."/>
            <person name="Hattori M."/>
            <person name="Ogasawara N."/>
            <person name="Hayashi H."/>
            <person name="Hiramatsu K."/>
        </authorList>
    </citation>
    <scope>NUCLEOTIDE SEQUENCE [LARGE SCALE GENOMIC DNA]</scope>
    <source>
        <strain>Mu50 / ATCC 700699</strain>
    </source>
</reference>
<feature type="chain" id="PRO_0000199840" description="Phosphopentomutase">
    <location>
        <begin position="1"/>
        <end position="392"/>
    </location>
</feature>
<feature type="binding site" evidence="1">
    <location>
        <position position="14"/>
    </location>
    <ligand>
        <name>Mn(2+)</name>
        <dbReference type="ChEBI" id="CHEBI:29035"/>
        <label>1</label>
    </ligand>
</feature>
<feature type="binding site" evidence="1">
    <location>
        <position position="286"/>
    </location>
    <ligand>
        <name>Mn(2+)</name>
        <dbReference type="ChEBI" id="CHEBI:29035"/>
        <label>2</label>
    </ligand>
</feature>
<feature type="binding site" evidence="1">
    <location>
        <position position="291"/>
    </location>
    <ligand>
        <name>Mn(2+)</name>
        <dbReference type="ChEBI" id="CHEBI:29035"/>
        <label>2</label>
    </ligand>
</feature>
<feature type="binding site" evidence="1">
    <location>
        <position position="327"/>
    </location>
    <ligand>
        <name>Mn(2+)</name>
        <dbReference type="ChEBI" id="CHEBI:29035"/>
        <label>1</label>
    </ligand>
</feature>
<feature type="binding site" evidence="1">
    <location>
        <position position="328"/>
    </location>
    <ligand>
        <name>Mn(2+)</name>
        <dbReference type="ChEBI" id="CHEBI:29035"/>
        <label>1</label>
    </ligand>
</feature>
<feature type="binding site" evidence="1">
    <location>
        <position position="339"/>
    </location>
    <ligand>
        <name>Mn(2+)</name>
        <dbReference type="ChEBI" id="CHEBI:29035"/>
        <label>2</label>
    </ligand>
</feature>
<keyword id="KW-0963">Cytoplasm</keyword>
<keyword id="KW-0413">Isomerase</keyword>
<keyword id="KW-0464">Manganese</keyword>
<keyword id="KW-0479">Metal-binding</keyword>